<evidence type="ECO:0000255" key="1">
    <source>
        <dbReference type="HAMAP-Rule" id="MF_00060"/>
    </source>
</evidence>
<protein>
    <recommendedName>
        <fullName evidence="1">5'-nucleotidase SurE</fullName>
        <ecNumber evidence="1">3.1.3.5</ecNumber>
    </recommendedName>
    <alternativeName>
        <fullName evidence="1">Nucleoside 5'-monophosphate phosphohydrolase</fullName>
    </alternativeName>
</protein>
<accession>B9KDQ8</accession>
<dbReference type="EC" id="3.1.3.5" evidence="1"/>
<dbReference type="EMBL" id="CP000932">
    <property type="protein sequence ID" value="ACM64696.1"/>
    <property type="molecule type" value="Genomic_DNA"/>
</dbReference>
<dbReference type="RefSeq" id="WP_012662079.1">
    <property type="nucleotide sequence ID" value="NC_012039.1"/>
</dbReference>
<dbReference type="RefSeq" id="WP_012662080.1">
    <property type="nucleotide sequence ID" value="NC_012039.1"/>
</dbReference>
<dbReference type="SMR" id="B9KDQ8"/>
<dbReference type="STRING" id="306263.Cla_1381"/>
<dbReference type="GeneID" id="66288082"/>
<dbReference type="KEGG" id="cla:CLA_1381"/>
<dbReference type="eggNOG" id="COG0496">
    <property type="taxonomic scope" value="Bacteria"/>
</dbReference>
<dbReference type="HOGENOM" id="CLU_045192_1_2_7"/>
<dbReference type="Proteomes" id="UP000007727">
    <property type="component" value="Chromosome"/>
</dbReference>
<dbReference type="GO" id="GO:0005737">
    <property type="term" value="C:cytoplasm"/>
    <property type="evidence" value="ECO:0007669"/>
    <property type="project" value="UniProtKB-SubCell"/>
</dbReference>
<dbReference type="GO" id="GO:0008254">
    <property type="term" value="F:3'-nucleotidase activity"/>
    <property type="evidence" value="ECO:0007669"/>
    <property type="project" value="TreeGrafter"/>
</dbReference>
<dbReference type="GO" id="GO:0008253">
    <property type="term" value="F:5'-nucleotidase activity"/>
    <property type="evidence" value="ECO:0007669"/>
    <property type="project" value="UniProtKB-UniRule"/>
</dbReference>
<dbReference type="GO" id="GO:0004309">
    <property type="term" value="F:exopolyphosphatase activity"/>
    <property type="evidence" value="ECO:0007669"/>
    <property type="project" value="TreeGrafter"/>
</dbReference>
<dbReference type="GO" id="GO:0046872">
    <property type="term" value="F:metal ion binding"/>
    <property type="evidence" value="ECO:0007669"/>
    <property type="project" value="UniProtKB-UniRule"/>
</dbReference>
<dbReference type="GO" id="GO:0000166">
    <property type="term" value="F:nucleotide binding"/>
    <property type="evidence" value="ECO:0007669"/>
    <property type="project" value="UniProtKB-KW"/>
</dbReference>
<dbReference type="FunFam" id="3.40.1210.10:FF:000001">
    <property type="entry name" value="5'/3'-nucleotidase SurE"/>
    <property type="match status" value="1"/>
</dbReference>
<dbReference type="Gene3D" id="3.40.1210.10">
    <property type="entry name" value="Survival protein SurE-like phosphatase/nucleotidase"/>
    <property type="match status" value="1"/>
</dbReference>
<dbReference type="HAMAP" id="MF_00060">
    <property type="entry name" value="SurE"/>
    <property type="match status" value="1"/>
</dbReference>
<dbReference type="InterPro" id="IPR030048">
    <property type="entry name" value="SurE"/>
</dbReference>
<dbReference type="InterPro" id="IPR002828">
    <property type="entry name" value="SurE-like_Pase/nucleotidase"/>
</dbReference>
<dbReference type="InterPro" id="IPR036523">
    <property type="entry name" value="SurE-like_sf"/>
</dbReference>
<dbReference type="NCBIfam" id="NF001490">
    <property type="entry name" value="PRK00346.1-4"/>
    <property type="match status" value="1"/>
</dbReference>
<dbReference type="NCBIfam" id="NF001494">
    <property type="entry name" value="PRK00346.2-4"/>
    <property type="match status" value="1"/>
</dbReference>
<dbReference type="NCBIfam" id="TIGR00087">
    <property type="entry name" value="surE"/>
    <property type="match status" value="1"/>
</dbReference>
<dbReference type="PANTHER" id="PTHR30457">
    <property type="entry name" value="5'-NUCLEOTIDASE SURE"/>
    <property type="match status" value="1"/>
</dbReference>
<dbReference type="PANTHER" id="PTHR30457:SF12">
    <property type="entry name" value="5'_3'-NUCLEOTIDASE SURE"/>
    <property type="match status" value="1"/>
</dbReference>
<dbReference type="Pfam" id="PF01975">
    <property type="entry name" value="SurE"/>
    <property type="match status" value="1"/>
</dbReference>
<dbReference type="SUPFAM" id="SSF64167">
    <property type="entry name" value="SurE-like"/>
    <property type="match status" value="1"/>
</dbReference>
<keyword id="KW-0963">Cytoplasm</keyword>
<keyword id="KW-0378">Hydrolase</keyword>
<keyword id="KW-0479">Metal-binding</keyword>
<keyword id="KW-0547">Nucleotide-binding</keyword>
<keyword id="KW-1185">Reference proteome</keyword>
<organism>
    <name type="scientific">Campylobacter lari (strain RM2100 / D67 / ATCC BAA-1060)</name>
    <dbReference type="NCBI Taxonomy" id="306263"/>
    <lineage>
        <taxon>Bacteria</taxon>
        <taxon>Pseudomonadati</taxon>
        <taxon>Campylobacterota</taxon>
        <taxon>Epsilonproteobacteria</taxon>
        <taxon>Campylobacterales</taxon>
        <taxon>Campylobacteraceae</taxon>
        <taxon>Campylobacter</taxon>
    </lineage>
</organism>
<name>SURE_CAMLR</name>
<gene>
    <name evidence="1" type="primary">surE</name>
    <name type="ordered locus">Cla_1381</name>
</gene>
<proteinExistence type="inferred from homology"/>
<feature type="chain" id="PRO_1000196585" description="5'-nucleotidase SurE">
    <location>
        <begin position="1"/>
        <end position="257"/>
    </location>
</feature>
<feature type="binding site" evidence="1">
    <location>
        <position position="9"/>
    </location>
    <ligand>
        <name>a divalent metal cation</name>
        <dbReference type="ChEBI" id="CHEBI:60240"/>
    </ligand>
</feature>
<feature type="binding site" evidence="1">
    <location>
        <position position="10"/>
    </location>
    <ligand>
        <name>a divalent metal cation</name>
        <dbReference type="ChEBI" id="CHEBI:60240"/>
    </ligand>
</feature>
<feature type="binding site" evidence="1">
    <location>
        <position position="42"/>
    </location>
    <ligand>
        <name>a divalent metal cation</name>
        <dbReference type="ChEBI" id="CHEBI:60240"/>
    </ligand>
</feature>
<feature type="binding site" evidence="1">
    <location>
        <position position="96"/>
    </location>
    <ligand>
        <name>a divalent metal cation</name>
        <dbReference type="ChEBI" id="CHEBI:60240"/>
    </ligand>
</feature>
<sequence>MKRILLTNDDGYESKGLIKLAKMLKKHFKAEITIVAPANEKSACSHSITLTKPLRFQKVKKRFYKLEDGTPADCVYLALHALYKNHLPDLIISGINKGANVGEDITYSGTCAGAMEAVLHGIPAIALSQFYQDDQKELNFKLALNITKKIVKKVFKKGFPLDKKEFLNINFPSSKTNFKGIKICKAGKRIYSYEAHSNINPRGIEYYWLAAANLDHEDEKKSDITLLKQGYATITPIMLNLTAYKQMKNLKKWMKNG</sequence>
<reference key="1">
    <citation type="journal article" date="2008" name="Foodborne Pathog. Dis.">
        <title>The complete genome sequence and analysis of the human pathogen Campylobacter lari.</title>
        <authorList>
            <person name="Miller W.G."/>
            <person name="Wang G."/>
            <person name="Binnewies T.T."/>
            <person name="Parker C.T."/>
        </authorList>
    </citation>
    <scope>NUCLEOTIDE SEQUENCE [LARGE SCALE GENOMIC DNA]</scope>
    <source>
        <strain>RM2100 / D67 / ATCC BAA-1060</strain>
    </source>
</reference>
<comment type="function">
    <text evidence="1">Nucleotidase that shows phosphatase activity on nucleoside 5'-monophosphates.</text>
</comment>
<comment type="catalytic activity">
    <reaction evidence="1">
        <text>a ribonucleoside 5'-phosphate + H2O = a ribonucleoside + phosphate</text>
        <dbReference type="Rhea" id="RHEA:12484"/>
        <dbReference type="ChEBI" id="CHEBI:15377"/>
        <dbReference type="ChEBI" id="CHEBI:18254"/>
        <dbReference type="ChEBI" id="CHEBI:43474"/>
        <dbReference type="ChEBI" id="CHEBI:58043"/>
        <dbReference type="EC" id="3.1.3.5"/>
    </reaction>
</comment>
<comment type="cofactor">
    <cofactor evidence="1">
        <name>a divalent metal cation</name>
        <dbReference type="ChEBI" id="CHEBI:60240"/>
    </cofactor>
    <text evidence="1">Binds 1 divalent metal cation per subunit.</text>
</comment>
<comment type="subcellular location">
    <subcellularLocation>
        <location evidence="1">Cytoplasm</location>
    </subcellularLocation>
</comment>
<comment type="similarity">
    <text evidence="1">Belongs to the SurE nucleotidase family.</text>
</comment>